<comment type="function">
    <text evidence="2">Plays a central role in 2-thiolation of mcm(5)S(2)U at tRNA wobble positions of cytosolic tRNA(Lys), tRNA(Glu) and tRNA(Gln). Also essential during biosynthesis of the molybdenum cofactor. Acts by mediating the C-terminal thiocarboxylation of sulfur carriers URM1 and MOCS2A. Its N-terminus first activates URM1 and MOCS2A as acyl-adenylates (-COAMP), then the persulfide sulfur on the catalytic cysteine is transferred to URM1 and MOCS2A to form thiocarboxylation (-COSH) of their C-terminus. The reaction probably involves hydrogen sulfide that is generated from the persulfide intermediate and that acts as a nucleophile towards URM1 and MOCS2A. Subsequently, a transient disulfide bond is formed. Does not use thiosulfate as sulfur donor; NFS1 probably acting as a sulfur donor for thiocarboxylation reactions.</text>
</comment>
<comment type="catalytic activity">
    <reaction evidence="2">
        <text>[molybdopterin-synthase sulfur-carrier protein]-C-terminal Gly-Gly + ATP + H(+) = [molybdopterin-synthase sulfur-carrier protein]-C-terminal Gly-Gly-AMP + diphosphate</text>
        <dbReference type="Rhea" id="RHEA:43616"/>
        <dbReference type="Rhea" id="RHEA-COMP:12159"/>
        <dbReference type="Rhea" id="RHEA-COMP:12202"/>
        <dbReference type="ChEBI" id="CHEBI:15378"/>
        <dbReference type="ChEBI" id="CHEBI:30616"/>
        <dbReference type="ChEBI" id="CHEBI:33019"/>
        <dbReference type="ChEBI" id="CHEBI:90618"/>
        <dbReference type="ChEBI" id="CHEBI:90778"/>
        <dbReference type="EC" id="2.7.7.80"/>
    </reaction>
</comment>
<comment type="catalytic activity">
    <reaction evidence="2">
        <text>[molybdopterin-synthase sulfur-carrier protein]-C-terminal Gly-Gly-AMP + S-sulfanyl-L-cysteinyl-[cysteine desulfurase] + AH2 = [molybdopterin-synthase sulfur-carrier protein]-C-terminal-Gly-aminoethanethioate + L-cysteinyl-[cysteine desulfurase] + A + AMP + 2 H(+)</text>
        <dbReference type="Rhea" id="RHEA:48612"/>
        <dbReference type="Rhea" id="RHEA-COMP:12157"/>
        <dbReference type="Rhea" id="RHEA-COMP:12158"/>
        <dbReference type="Rhea" id="RHEA-COMP:12159"/>
        <dbReference type="Rhea" id="RHEA-COMP:19907"/>
        <dbReference type="ChEBI" id="CHEBI:13193"/>
        <dbReference type="ChEBI" id="CHEBI:15378"/>
        <dbReference type="ChEBI" id="CHEBI:17499"/>
        <dbReference type="ChEBI" id="CHEBI:29950"/>
        <dbReference type="ChEBI" id="CHEBI:61963"/>
        <dbReference type="ChEBI" id="CHEBI:90618"/>
        <dbReference type="ChEBI" id="CHEBI:232372"/>
        <dbReference type="ChEBI" id="CHEBI:456215"/>
        <dbReference type="EC" id="2.8.1.11"/>
    </reaction>
</comment>
<comment type="cofactor">
    <cofactor evidence="2">
        <name>Zn(2+)</name>
        <dbReference type="ChEBI" id="CHEBI:29105"/>
    </cofactor>
    <text evidence="2">Binds 1 zinc ion per subunit.</text>
</comment>
<comment type="pathway">
    <text evidence="2">tRNA modification; 5-methoxycarbonylmethyl-2-thiouridine-tRNA biosynthesis.</text>
</comment>
<comment type="pathway">
    <text evidence="2">Cofactor biosynthesis; molybdopterin biosynthesis.</text>
</comment>
<comment type="subcellular location">
    <subcellularLocation>
        <location evidence="1">Cytoplasm</location>
        <location evidence="1">Cytosol</location>
    </subcellularLocation>
</comment>
<comment type="similarity">
    <text evidence="2">In the N-terminal section; belongs to the HesA/MoeB/ThiF family. UBA4 subfamily.</text>
</comment>
<organism>
    <name type="scientific">Oryza sativa subsp. japonica</name>
    <name type="common">Rice</name>
    <dbReference type="NCBI Taxonomy" id="39947"/>
    <lineage>
        <taxon>Eukaryota</taxon>
        <taxon>Viridiplantae</taxon>
        <taxon>Streptophyta</taxon>
        <taxon>Embryophyta</taxon>
        <taxon>Tracheophyta</taxon>
        <taxon>Spermatophyta</taxon>
        <taxon>Magnoliopsida</taxon>
        <taxon>Liliopsida</taxon>
        <taxon>Poales</taxon>
        <taxon>Poaceae</taxon>
        <taxon>BOP clade</taxon>
        <taxon>Oryzoideae</taxon>
        <taxon>Oryzeae</taxon>
        <taxon>Oryzinae</taxon>
        <taxon>Oryza</taxon>
        <taxon>Oryza sativa</taxon>
    </lineage>
</organism>
<name>MOCS3_ORYSJ</name>
<keyword id="KW-0067">ATP-binding</keyword>
<keyword id="KW-0963">Cytoplasm</keyword>
<keyword id="KW-0479">Metal-binding</keyword>
<keyword id="KW-0501">Molybdenum cofactor biosynthesis</keyword>
<keyword id="KW-0511">Multifunctional enzyme</keyword>
<keyword id="KW-0547">Nucleotide-binding</keyword>
<keyword id="KW-0548">Nucleotidyltransferase</keyword>
<keyword id="KW-1185">Reference proteome</keyword>
<keyword id="KW-0808">Transferase</keyword>
<keyword id="KW-0819">tRNA processing</keyword>
<keyword id="KW-0862">Zinc</keyword>
<dbReference type="EC" id="2.7.7.80" evidence="2"/>
<dbReference type="EC" id="2.8.1.11" evidence="2"/>
<dbReference type="EMBL" id="AP004240">
    <property type="status" value="NOT_ANNOTATED_CDS"/>
    <property type="molecule type" value="Genomic_DNA"/>
</dbReference>
<dbReference type="EMBL" id="AP014958">
    <property type="status" value="NOT_ANNOTATED_CDS"/>
    <property type="molecule type" value="Genomic_DNA"/>
</dbReference>
<dbReference type="EMBL" id="CM000139">
    <property type="protein sequence ID" value="EAZ24992.1"/>
    <property type="molecule type" value="Genomic_DNA"/>
</dbReference>
<dbReference type="SMR" id="A3ACF3"/>
<dbReference type="FunCoup" id="A3ACF3">
    <property type="interactions" value="2092"/>
</dbReference>
<dbReference type="STRING" id="39947.A3ACF3"/>
<dbReference type="PaxDb" id="39947-A3ACF3"/>
<dbReference type="InParanoid" id="A3ACF3"/>
<dbReference type="UniPathway" id="UPA00344"/>
<dbReference type="UniPathway" id="UPA00988"/>
<dbReference type="Proteomes" id="UP000000763">
    <property type="component" value="Chromosome 2"/>
</dbReference>
<dbReference type="Proteomes" id="UP000007752">
    <property type="component" value="Chromosome 2"/>
</dbReference>
<dbReference type="Proteomes" id="UP000059680">
    <property type="component" value="Chromosome 2"/>
</dbReference>
<dbReference type="GO" id="GO:0005737">
    <property type="term" value="C:cytoplasm"/>
    <property type="evidence" value="ECO:0000318"/>
    <property type="project" value="GO_Central"/>
</dbReference>
<dbReference type="GO" id="GO:0005829">
    <property type="term" value="C:cytosol"/>
    <property type="evidence" value="ECO:0007669"/>
    <property type="project" value="InterPro"/>
</dbReference>
<dbReference type="GO" id="GO:0005524">
    <property type="term" value="F:ATP binding"/>
    <property type="evidence" value="ECO:0007669"/>
    <property type="project" value="UniProtKB-KW"/>
</dbReference>
<dbReference type="GO" id="GO:0046872">
    <property type="term" value="F:metal ion binding"/>
    <property type="evidence" value="ECO:0007669"/>
    <property type="project" value="UniProtKB-KW"/>
</dbReference>
<dbReference type="GO" id="GO:0061605">
    <property type="term" value="F:molybdopterin-synthase adenylyltransferase activity"/>
    <property type="evidence" value="ECO:0007669"/>
    <property type="project" value="UniProtKB-EC"/>
</dbReference>
<dbReference type="GO" id="GO:0061604">
    <property type="term" value="F:molybdopterin-synthase sulfurtransferase activity"/>
    <property type="evidence" value="ECO:0007669"/>
    <property type="project" value="UniProtKB-EC"/>
</dbReference>
<dbReference type="GO" id="GO:0016779">
    <property type="term" value="F:nucleotidyltransferase activity"/>
    <property type="evidence" value="ECO:0000318"/>
    <property type="project" value="GO_Central"/>
</dbReference>
<dbReference type="GO" id="GO:0004792">
    <property type="term" value="F:thiosulfate-cyanide sulfurtransferase activity"/>
    <property type="evidence" value="ECO:0000318"/>
    <property type="project" value="GO_Central"/>
</dbReference>
<dbReference type="GO" id="GO:0042292">
    <property type="term" value="F:URM1 activating enzyme activity"/>
    <property type="evidence" value="ECO:0000318"/>
    <property type="project" value="GO_Central"/>
</dbReference>
<dbReference type="GO" id="GO:0006777">
    <property type="term" value="P:Mo-molybdopterin cofactor biosynthetic process"/>
    <property type="evidence" value="ECO:0007669"/>
    <property type="project" value="UniProtKB-UniRule"/>
</dbReference>
<dbReference type="GO" id="GO:0002143">
    <property type="term" value="P:tRNA wobble position uridine thiolation"/>
    <property type="evidence" value="ECO:0007669"/>
    <property type="project" value="InterPro"/>
</dbReference>
<dbReference type="CDD" id="cd00757">
    <property type="entry name" value="ThiF_MoeB_HesA_family"/>
    <property type="match status" value="1"/>
</dbReference>
<dbReference type="FunFam" id="3.40.250.10:FF:000014">
    <property type="entry name" value="Adenylyltransferase and sulfurtransferase MOCS3"/>
    <property type="match status" value="1"/>
</dbReference>
<dbReference type="FunFam" id="3.40.50.720:FF:000748">
    <property type="entry name" value="Adenylyltransferase and sulfurtransferase MOCS3"/>
    <property type="match status" value="1"/>
</dbReference>
<dbReference type="FunFam" id="3.40.50.720:FF:000786">
    <property type="entry name" value="Adenylyltransferase and sulfurtransferase MOCS3"/>
    <property type="match status" value="1"/>
</dbReference>
<dbReference type="Gene3D" id="3.40.50.720">
    <property type="entry name" value="NAD(P)-binding Rossmann-like Domain"/>
    <property type="match status" value="2"/>
</dbReference>
<dbReference type="Gene3D" id="3.40.250.10">
    <property type="entry name" value="Rhodanese-like domain"/>
    <property type="match status" value="1"/>
</dbReference>
<dbReference type="HAMAP" id="MF_03049">
    <property type="entry name" value="MOCS3_Uba4"/>
    <property type="match status" value="1"/>
</dbReference>
<dbReference type="InterPro" id="IPR028885">
    <property type="entry name" value="MOCS3/Uba4"/>
</dbReference>
<dbReference type="InterPro" id="IPR001763">
    <property type="entry name" value="Rhodanese-like_dom"/>
</dbReference>
<dbReference type="InterPro" id="IPR036873">
    <property type="entry name" value="Rhodanese-like_dom_sf"/>
</dbReference>
<dbReference type="InterPro" id="IPR045886">
    <property type="entry name" value="ThiF/MoeB/HesA"/>
</dbReference>
<dbReference type="InterPro" id="IPR000594">
    <property type="entry name" value="ThiF_NAD_FAD-bd"/>
</dbReference>
<dbReference type="InterPro" id="IPR035985">
    <property type="entry name" value="Ubiquitin-activating_enz"/>
</dbReference>
<dbReference type="PANTHER" id="PTHR10953:SF102">
    <property type="entry name" value="ADENYLYLTRANSFERASE AND SULFURTRANSFERASE MOCS3"/>
    <property type="match status" value="1"/>
</dbReference>
<dbReference type="PANTHER" id="PTHR10953">
    <property type="entry name" value="UBIQUITIN-ACTIVATING ENZYME E1"/>
    <property type="match status" value="1"/>
</dbReference>
<dbReference type="Pfam" id="PF00581">
    <property type="entry name" value="Rhodanese"/>
    <property type="match status" value="1"/>
</dbReference>
<dbReference type="Pfam" id="PF00899">
    <property type="entry name" value="ThiF"/>
    <property type="match status" value="1"/>
</dbReference>
<dbReference type="SMART" id="SM00450">
    <property type="entry name" value="RHOD"/>
    <property type="match status" value="1"/>
</dbReference>
<dbReference type="SUPFAM" id="SSF69572">
    <property type="entry name" value="Activating enzymes of the ubiquitin-like proteins"/>
    <property type="match status" value="1"/>
</dbReference>
<dbReference type="PROSITE" id="PS50206">
    <property type="entry name" value="RHODANESE_3"/>
    <property type="match status" value="1"/>
</dbReference>
<feature type="chain" id="PRO_0000369215" description="Adenylyltransferase and sulfurtransferase MOCS3">
    <location>
        <begin position="1"/>
        <end position="445"/>
    </location>
</feature>
<feature type="domain" description="Rhodanese" evidence="2">
    <location>
        <begin position="342"/>
        <end position="443"/>
    </location>
</feature>
<feature type="region of interest" description="Disordered" evidence="3">
    <location>
        <begin position="49"/>
        <end position="70"/>
    </location>
</feature>
<feature type="active site" description="Glycyl thioester intermediate; for adenylyltransferase activity" evidence="2">
    <location>
        <position position="228"/>
    </location>
</feature>
<feature type="active site" description="Cysteine persulfide intermediate; for sulfurtransferase activity" evidence="2">
    <location>
        <position position="403"/>
    </location>
</feature>
<feature type="binding site" evidence="2">
    <location>
        <position position="106"/>
    </location>
    <ligand>
        <name>ATP</name>
        <dbReference type="ChEBI" id="CHEBI:30616"/>
    </ligand>
</feature>
<feature type="binding site" evidence="2">
    <location>
        <position position="127"/>
    </location>
    <ligand>
        <name>ATP</name>
        <dbReference type="ChEBI" id="CHEBI:30616"/>
    </ligand>
</feature>
<feature type="binding site" evidence="2">
    <location>
        <begin position="134"/>
        <end position="138"/>
    </location>
    <ligand>
        <name>ATP</name>
        <dbReference type="ChEBI" id="CHEBI:30616"/>
    </ligand>
</feature>
<feature type="binding site" evidence="2">
    <location>
        <position position="151"/>
    </location>
    <ligand>
        <name>ATP</name>
        <dbReference type="ChEBI" id="CHEBI:30616"/>
    </ligand>
</feature>
<feature type="binding site" evidence="2">
    <location>
        <begin position="170"/>
        <end position="171"/>
    </location>
    <ligand>
        <name>ATP</name>
        <dbReference type="ChEBI" id="CHEBI:30616"/>
    </ligand>
</feature>
<feature type="binding site" evidence="2">
    <location>
        <position position="211"/>
    </location>
    <ligand>
        <name>Zn(2+)</name>
        <dbReference type="ChEBI" id="CHEBI:29105"/>
    </ligand>
</feature>
<feature type="binding site" evidence="2">
    <location>
        <position position="214"/>
    </location>
    <ligand>
        <name>Zn(2+)</name>
        <dbReference type="ChEBI" id="CHEBI:29105"/>
    </ligand>
</feature>
<feature type="binding site" evidence="2">
    <location>
        <position position="286"/>
    </location>
    <ligand>
        <name>Zn(2+)</name>
        <dbReference type="ChEBI" id="CHEBI:29105"/>
    </ligand>
</feature>
<feature type="binding site" evidence="2">
    <location>
        <position position="289"/>
    </location>
    <ligand>
        <name>Zn(2+)</name>
        <dbReference type="ChEBI" id="CHEBI:29105"/>
    </ligand>
</feature>
<evidence type="ECO:0000250" key="1">
    <source>
        <dbReference type="UniProtKB" id="O95396"/>
    </source>
</evidence>
<evidence type="ECO:0000255" key="2">
    <source>
        <dbReference type="HAMAP-Rule" id="MF_03049"/>
    </source>
</evidence>
<evidence type="ECO:0000256" key="3">
    <source>
        <dbReference type="SAM" id="MobiDB-lite"/>
    </source>
</evidence>
<gene>
    <name evidence="2" type="primary">MOCS3</name>
    <name evidence="2" type="synonym">CNX5</name>
    <name evidence="2" type="synonym">UBA4</name>
    <name type="ordered locus">Os02g0804600</name>
    <name type="ordered locus">LOC_Os02g56050/LOC_Os02g56080</name>
    <name type="ORF">OsJ_008475</name>
</gene>
<reference key="1">
    <citation type="journal article" date="2005" name="Nature">
        <title>The map-based sequence of the rice genome.</title>
        <authorList>
            <consortium name="International rice genome sequencing project (IRGSP)"/>
        </authorList>
    </citation>
    <scope>NUCLEOTIDE SEQUENCE [LARGE SCALE GENOMIC DNA]</scope>
    <source>
        <strain>cv. Nipponbare</strain>
    </source>
</reference>
<reference key="2">
    <citation type="journal article" date="2013" name="Rice">
        <title>Improvement of the Oryza sativa Nipponbare reference genome using next generation sequence and optical map data.</title>
        <authorList>
            <person name="Kawahara Y."/>
            <person name="de la Bastide M."/>
            <person name="Hamilton J.P."/>
            <person name="Kanamori H."/>
            <person name="McCombie W.R."/>
            <person name="Ouyang S."/>
            <person name="Schwartz D.C."/>
            <person name="Tanaka T."/>
            <person name="Wu J."/>
            <person name="Zhou S."/>
            <person name="Childs K.L."/>
            <person name="Davidson R.M."/>
            <person name="Lin H."/>
            <person name="Quesada-Ocampo L."/>
            <person name="Vaillancourt B."/>
            <person name="Sakai H."/>
            <person name="Lee S.S."/>
            <person name="Kim J."/>
            <person name="Numa H."/>
            <person name="Itoh T."/>
            <person name="Buell C.R."/>
            <person name="Matsumoto T."/>
        </authorList>
    </citation>
    <scope>GENOME REANNOTATION</scope>
    <source>
        <strain>cv. Nipponbare</strain>
    </source>
</reference>
<reference key="3">
    <citation type="journal article" date="2005" name="PLoS Biol.">
        <title>The genomes of Oryza sativa: a history of duplications.</title>
        <authorList>
            <person name="Yu J."/>
            <person name="Wang J."/>
            <person name="Lin W."/>
            <person name="Li S."/>
            <person name="Li H."/>
            <person name="Zhou J."/>
            <person name="Ni P."/>
            <person name="Dong W."/>
            <person name="Hu S."/>
            <person name="Zeng C."/>
            <person name="Zhang J."/>
            <person name="Zhang Y."/>
            <person name="Li R."/>
            <person name="Xu Z."/>
            <person name="Li S."/>
            <person name="Li X."/>
            <person name="Zheng H."/>
            <person name="Cong L."/>
            <person name="Lin L."/>
            <person name="Yin J."/>
            <person name="Geng J."/>
            <person name="Li G."/>
            <person name="Shi J."/>
            <person name="Liu J."/>
            <person name="Lv H."/>
            <person name="Li J."/>
            <person name="Wang J."/>
            <person name="Deng Y."/>
            <person name="Ran L."/>
            <person name="Shi X."/>
            <person name="Wang X."/>
            <person name="Wu Q."/>
            <person name="Li C."/>
            <person name="Ren X."/>
            <person name="Wang J."/>
            <person name="Wang X."/>
            <person name="Li D."/>
            <person name="Liu D."/>
            <person name="Zhang X."/>
            <person name="Ji Z."/>
            <person name="Zhao W."/>
            <person name="Sun Y."/>
            <person name="Zhang Z."/>
            <person name="Bao J."/>
            <person name="Han Y."/>
            <person name="Dong L."/>
            <person name="Ji J."/>
            <person name="Chen P."/>
            <person name="Wu S."/>
            <person name="Liu J."/>
            <person name="Xiao Y."/>
            <person name="Bu D."/>
            <person name="Tan J."/>
            <person name="Yang L."/>
            <person name="Ye C."/>
            <person name="Zhang J."/>
            <person name="Xu J."/>
            <person name="Zhou Y."/>
            <person name="Yu Y."/>
            <person name="Zhang B."/>
            <person name="Zhuang S."/>
            <person name="Wei H."/>
            <person name="Liu B."/>
            <person name="Lei M."/>
            <person name="Yu H."/>
            <person name="Li Y."/>
            <person name="Xu H."/>
            <person name="Wei S."/>
            <person name="He X."/>
            <person name="Fang L."/>
            <person name="Zhang Z."/>
            <person name="Zhang Y."/>
            <person name="Huang X."/>
            <person name="Su Z."/>
            <person name="Tong W."/>
            <person name="Li J."/>
            <person name="Tong Z."/>
            <person name="Li S."/>
            <person name="Ye J."/>
            <person name="Wang L."/>
            <person name="Fang L."/>
            <person name="Lei T."/>
            <person name="Chen C.-S."/>
            <person name="Chen H.-C."/>
            <person name="Xu Z."/>
            <person name="Li H."/>
            <person name="Huang H."/>
            <person name="Zhang F."/>
            <person name="Xu H."/>
            <person name="Li N."/>
            <person name="Zhao C."/>
            <person name="Li S."/>
            <person name="Dong L."/>
            <person name="Huang Y."/>
            <person name="Li L."/>
            <person name="Xi Y."/>
            <person name="Qi Q."/>
            <person name="Li W."/>
            <person name="Zhang B."/>
            <person name="Hu W."/>
            <person name="Zhang Y."/>
            <person name="Tian X."/>
            <person name="Jiao Y."/>
            <person name="Liang X."/>
            <person name="Jin J."/>
            <person name="Gao L."/>
            <person name="Zheng W."/>
            <person name="Hao B."/>
            <person name="Liu S.-M."/>
            <person name="Wang W."/>
            <person name="Yuan L."/>
            <person name="Cao M."/>
            <person name="McDermott J."/>
            <person name="Samudrala R."/>
            <person name="Wang J."/>
            <person name="Wong G.K.-S."/>
            <person name="Yang H."/>
        </authorList>
    </citation>
    <scope>NUCLEOTIDE SEQUENCE [LARGE SCALE GENOMIC DNA]</scope>
    <source>
        <strain>cv. Nipponbare</strain>
    </source>
</reference>
<proteinExistence type="inferred from homology"/>
<accession>A3ACF3</accession>
<sequence>MEGGGDDDGGRSRAEAIMRELERLRAEREELDGRIRLLESQLRLGAAPLPPSAAAEVEPTGSPSSSSSAAADMISRYRRHLLLPQFGLEGQRKLSQSSILVVGAGGLGSPVAMYLAACGVGCLGIVDGDRVELDNLHRQIIHIEAYVGQPKVKSTAASCRAYDIVVDATNNLPSRYMISDCCVLMNKPLISGSAVGLEGQLTVYHHNGSPCYRCLYPNPPSSPTSQSCSDNGILGILPGVIGCLQALEAIKVATAVGKPLCGRMLHFDALSSHTRIVKISRSSPTCKVCGENPVFTKEDFVNFDYESFTQSPMSKNSTTRSLNLLPENARVSCRDYKKVLDSGRPHLLVDVRPSHHFQIASMAHSINVPLSLLEEKLPLLRDSAREVSSRRDGRQHCPVYVICRRGNDSQVAVQILRENGFLYASDVAGGFESWAKEVDPSFLLY</sequence>
<protein>
    <recommendedName>
        <fullName evidence="2">Adenylyltransferase and sulfurtransferase MOCS3</fullName>
    </recommendedName>
    <alternativeName>
        <fullName evidence="2">Molybdenum cofactor synthesis protein 3</fullName>
    </alternativeName>
    <domain>
        <recommendedName>
            <fullName evidence="2">Molybdopterin-synthase adenylyltransferase</fullName>
            <ecNumber evidence="2">2.7.7.80</ecNumber>
        </recommendedName>
        <alternativeName>
            <fullName evidence="2">Adenylyltransferase MOCS3</fullName>
        </alternativeName>
        <alternativeName>
            <fullName evidence="2">Sulfur carrier protein MOCS2A adenylyltransferase</fullName>
        </alternativeName>
    </domain>
    <domain>
        <recommendedName>
            <fullName evidence="2">Molybdopterin-synthase sulfurtransferase</fullName>
            <ecNumber evidence="2">2.8.1.11</ecNumber>
        </recommendedName>
        <alternativeName>
            <fullName evidence="2">Sulfur carrier protein MOCS2A sulfurtransferase</fullName>
        </alternativeName>
        <alternativeName>
            <fullName evidence="2">Sulfurtransferase MOCS3</fullName>
        </alternativeName>
    </domain>
</protein>